<comment type="function">
    <text evidence="1">NDH shuttles electrons from NAD(P)H:plastoquinone, via FMN and iron-sulfur (Fe-S) centers, to quinones in the photosynthetic chain and possibly in a chloroplast respiratory chain. The immediate electron acceptor for the enzyme in this species is believed to be plastoquinone. Couples the redox reaction to proton translocation, and thus conserves the redox energy in a proton gradient (By similarity).</text>
</comment>
<comment type="catalytic activity">
    <reaction>
        <text>a plastoquinone + NADH + (n+1) H(+)(in) = a plastoquinol + NAD(+) + n H(+)(out)</text>
        <dbReference type="Rhea" id="RHEA:42608"/>
        <dbReference type="Rhea" id="RHEA-COMP:9561"/>
        <dbReference type="Rhea" id="RHEA-COMP:9562"/>
        <dbReference type="ChEBI" id="CHEBI:15378"/>
        <dbReference type="ChEBI" id="CHEBI:17757"/>
        <dbReference type="ChEBI" id="CHEBI:57540"/>
        <dbReference type="ChEBI" id="CHEBI:57945"/>
        <dbReference type="ChEBI" id="CHEBI:62192"/>
    </reaction>
</comment>
<comment type="catalytic activity">
    <reaction>
        <text>a plastoquinone + NADPH + (n+1) H(+)(in) = a plastoquinol + NADP(+) + n H(+)(out)</text>
        <dbReference type="Rhea" id="RHEA:42612"/>
        <dbReference type="Rhea" id="RHEA-COMP:9561"/>
        <dbReference type="Rhea" id="RHEA-COMP:9562"/>
        <dbReference type="ChEBI" id="CHEBI:15378"/>
        <dbReference type="ChEBI" id="CHEBI:17757"/>
        <dbReference type="ChEBI" id="CHEBI:57783"/>
        <dbReference type="ChEBI" id="CHEBI:58349"/>
        <dbReference type="ChEBI" id="CHEBI:62192"/>
    </reaction>
</comment>
<comment type="subunit">
    <text evidence="1">NDH is composed of at least 16 different subunits, 5 of which are encoded in the nucleus.</text>
</comment>
<comment type="subcellular location">
    <subcellularLocation>
        <location evidence="1">Plastid</location>
        <location evidence="1">Chloroplast thylakoid membrane</location>
        <topology evidence="1">Multi-pass membrane protein</topology>
    </subcellularLocation>
</comment>
<comment type="similarity">
    <text evidence="3">Belongs to the complex I subunit 6 family.</text>
</comment>
<protein>
    <recommendedName>
        <fullName>NAD(P)H-quinone oxidoreductase subunit 6, chloroplastic</fullName>
        <ecNumber>7.1.1.-</ecNumber>
    </recommendedName>
    <alternativeName>
        <fullName>NAD(P)H dehydrogenase subunit 6</fullName>
    </alternativeName>
    <alternativeName>
        <fullName>NADH-plastoquinone oxidoreductase subunit 6</fullName>
    </alternativeName>
</protein>
<reference key="1">
    <citation type="journal article" date="2007" name="Mol. Phylogenet. Evol.">
        <title>Phylogenetic and evolutionary implications of complete chloroplast genome sequences of four early-diverging angiosperms: Buxus (Buxaceae), Chloranthus (Chloranthaceae), Dioscorea (Dioscoreaceae), and Illicium (Schisandraceae).</title>
        <authorList>
            <person name="Hansen D.R."/>
            <person name="Dastidar S.G."/>
            <person name="Cai Z."/>
            <person name="Penaflor C."/>
            <person name="Kuehl J.V."/>
            <person name="Boore J.L."/>
            <person name="Jansen R.K."/>
        </authorList>
    </citation>
    <scope>NUCLEOTIDE SEQUENCE [LARGE SCALE GENOMIC DNA]</scope>
</reference>
<name>NU6C_CHLSC</name>
<proteinExistence type="inferred from homology"/>
<organism>
    <name type="scientific">Chloranthus spicatus</name>
    <name type="common">Chulantree</name>
    <name type="synonym">Nigrina spicata</name>
    <dbReference type="NCBI Taxonomy" id="13006"/>
    <lineage>
        <taxon>Eukaryota</taxon>
        <taxon>Viridiplantae</taxon>
        <taxon>Streptophyta</taxon>
        <taxon>Embryophyta</taxon>
        <taxon>Tracheophyta</taxon>
        <taxon>Spermatophyta</taxon>
        <taxon>Magnoliopsida</taxon>
        <taxon>Chloranthales</taxon>
        <taxon>Chloranthaceae</taxon>
        <taxon>Chloranthus</taxon>
    </lineage>
</organism>
<evidence type="ECO:0000250" key="1"/>
<evidence type="ECO:0000255" key="2"/>
<evidence type="ECO:0000305" key="3"/>
<accession>A6MMH4</accession>
<sequence>MDLPGPIHDILLVFLGSGLILGGLGVVLLTNPISSAFSLGLVLVCISLFYIPSNSYFVAAAQLLIYVGAINVLIVFAVMFMNGSEYYNDFHLWTIGDGFTSLVCTSILFSLITTIPDTSWYGIIWTTRSNQIIEQDLTSNVQQIGIHLSTDFYLPFELISIILLVALIGAIAMARQ</sequence>
<feature type="chain" id="PRO_0000360239" description="NAD(P)H-quinone oxidoreductase subunit 6, chloroplastic">
    <location>
        <begin position="1"/>
        <end position="176"/>
    </location>
</feature>
<feature type="transmembrane region" description="Helical" evidence="2">
    <location>
        <begin position="10"/>
        <end position="30"/>
    </location>
</feature>
<feature type="transmembrane region" description="Helical" evidence="2">
    <location>
        <begin position="32"/>
        <end position="52"/>
    </location>
</feature>
<feature type="transmembrane region" description="Helical" evidence="2">
    <location>
        <begin position="61"/>
        <end position="81"/>
    </location>
</feature>
<feature type="transmembrane region" description="Helical" evidence="2">
    <location>
        <begin position="92"/>
        <end position="112"/>
    </location>
</feature>
<feature type="transmembrane region" description="Helical" evidence="2">
    <location>
        <begin position="152"/>
        <end position="172"/>
    </location>
</feature>
<keyword id="KW-0150">Chloroplast</keyword>
<keyword id="KW-0472">Membrane</keyword>
<keyword id="KW-0520">NAD</keyword>
<keyword id="KW-0521">NADP</keyword>
<keyword id="KW-0934">Plastid</keyword>
<keyword id="KW-0618">Plastoquinone</keyword>
<keyword id="KW-0874">Quinone</keyword>
<keyword id="KW-0793">Thylakoid</keyword>
<keyword id="KW-1278">Translocase</keyword>
<keyword id="KW-0812">Transmembrane</keyword>
<keyword id="KW-1133">Transmembrane helix</keyword>
<keyword id="KW-0813">Transport</keyword>
<dbReference type="EC" id="7.1.1.-"/>
<dbReference type="EMBL" id="EF380352">
    <property type="protein sequence ID" value="ABQ43311.1"/>
    <property type="molecule type" value="Genomic_DNA"/>
</dbReference>
<dbReference type="RefSeq" id="YP_001294150.1">
    <property type="nucleotide sequence ID" value="NC_009598.1"/>
</dbReference>
<dbReference type="SMR" id="A6MMH4"/>
<dbReference type="GeneID" id="5236447"/>
<dbReference type="GO" id="GO:0009535">
    <property type="term" value="C:chloroplast thylakoid membrane"/>
    <property type="evidence" value="ECO:0007669"/>
    <property type="project" value="UniProtKB-SubCell"/>
</dbReference>
<dbReference type="GO" id="GO:0008137">
    <property type="term" value="F:NADH dehydrogenase (ubiquinone) activity"/>
    <property type="evidence" value="ECO:0007669"/>
    <property type="project" value="InterPro"/>
</dbReference>
<dbReference type="GO" id="GO:0048038">
    <property type="term" value="F:quinone binding"/>
    <property type="evidence" value="ECO:0007669"/>
    <property type="project" value="UniProtKB-KW"/>
</dbReference>
<dbReference type="FunFam" id="1.20.120.1200:FF:000002">
    <property type="entry name" value="NAD(P)H-quinone oxidoreductase subunit 6, chloroplastic"/>
    <property type="match status" value="1"/>
</dbReference>
<dbReference type="Gene3D" id="1.20.120.1200">
    <property type="entry name" value="NADH-ubiquinone/plastoquinone oxidoreductase chain 6, subunit NuoJ"/>
    <property type="match status" value="1"/>
</dbReference>
<dbReference type="InterPro" id="IPR050290">
    <property type="entry name" value="NAD(P)H-Q_Oxidoreduct_6"/>
</dbReference>
<dbReference type="InterPro" id="IPR001457">
    <property type="entry name" value="NADH_UbQ/plastoQ_OxRdtase_su6"/>
</dbReference>
<dbReference type="InterPro" id="IPR042106">
    <property type="entry name" value="Nuo/plastoQ_OxRdtase_6_NuoJ"/>
</dbReference>
<dbReference type="PANTHER" id="PTHR48479">
    <property type="entry name" value="NAD(P)H-QUINONE OXIDOREDUCTASE SUBUNIT 6, CHLOROPLASTIC"/>
    <property type="match status" value="1"/>
</dbReference>
<dbReference type="PANTHER" id="PTHR48479:SF1">
    <property type="entry name" value="NAD(P)H-QUINONE OXIDOREDUCTASE SUBUNIT 6, CHLOROPLASTIC"/>
    <property type="match status" value="1"/>
</dbReference>
<dbReference type="Pfam" id="PF00499">
    <property type="entry name" value="Oxidored_q3"/>
    <property type="match status" value="1"/>
</dbReference>
<geneLocation type="chloroplast"/>
<gene>
    <name type="primary">ndhG</name>
</gene>